<comment type="similarity">
    <text evidence="1">Belongs to the eukaryotic ribosomal protein eS1 family.</text>
</comment>
<keyword id="KW-1185">Reference proteome</keyword>
<keyword id="KW-0687">Ribonucleoprotein</keyword>
<keyword id="KW-0689">Ribosomal protein</keyword>
<protein>
    <recommendedName>
        <fullName evidence="1">Small ribosomal subunit protein eS1</fullName>
    </recommendedName>
    <alternativeName>
        <fullName evidence="2">30S ribosomal protein S3Ae</fullName>
    </alternativeName>
    <alternativeName>
        <fullName evidence="1">Ribosomal protein S1e</fullName>
    </alternativeName>
</protein>
<dbReference type="EMBL" id="AE000782">
    <property type="protein sequence ID" value="AAB88936.1"/>
    <property type="molecule type" value="Genomic_DNA"/>
</dbReference>
<dbReference type="PIR" id="H69539">
    <property type="entry name" value="H69539"/>
</dbReference>
<dbReference type="RefSeq" id="WP_010879809.1">
    <property type="nucleotide sequence ID" value="NC_000917.1"/>
</dbReference>
<dbReference type="SMR" id="O27964"/>
<dbReference type="STRING" id="224325.AF_2320"/>
<dbReference type="PaxDb" id="224325-AF_2320"/>
<dbReference type="EnsemblBacteria" id="AAB88936">
    <property type="protein sequence ID" value="AAB88936"/>
    <property type="gene ID" value="AF_2320"/>
</dbReference>
<dbReference type="KEGG" id="afu:AF_2320"/>
<dbReference type="eggNOG" id="arCOG04186">
    <property type="taxonomic scope" value="Archaea"/>
</dbReference>
<dbReference type="HOGENOM" id="CLU_062507_1_0_2"/>
<dbReference type="OrthoDB" id="30639at2157"/>
<dbReference type="PhylomeDB" id="O27964"/>
<dbReference type="Proteomes" id="UP000002199">
    <property type="component" value="Chromosome"/>
</dbReference>
<dbReference type="GO" id="GO:1990904">
    <property type="term" value="C:ribonucleoprotein complex"/>
    <property type="evidence" value="ECO:0007669"/>
    <property type="project" value="UniProtKB-KW"/>
</dbReference>
<dbReference type="GO" id="GO:0005840">
    <property type="term" value="C:ribosome"/>
    <property type="evidence" value="ECO:0007669"/>
    <property type="project" value="UniProtKB-KW"/>
</dbReference>
<dbReference type="GO" id="GO:0003735">
    <property type="term" value="F:structural constituent of ribosome"/>
    <property type="evidence" value="ECO:0007669"/>
    <property type="project" value="InterPro"/>
</dbReference>
<dbReference type="GO" id="GO:0006412">
    <property type="term" value="P:translation"/>
    <property type="evidence" value="ECO:0007669"/>
    <property type="project" value="UniProtKB-UniRule"/>
</dbReference>
<dbReference type="HAMAP" id="MF_00359">
    <property type="entry name" value="Ribosomal_eS1"/>
    <property type="match status" value="1"/>
</dbReference>
<dbReference type="InterPro" id="IPR001593">
    <property type="entry name" value="Ribosomal_eS1"/>
</dbReference>
<dbReference type="InterPro" id="IPR030838">
    <property type="entry name" value="Ribosomal_eS1_arc"/>
</dbReference>
<dbReference type="InterPro" id="IPR018281">
    <property type="entry name" value="Ribosomal_eS1_CS"/>
</dbReference>
<dbReference type="NCBIfam" id="NF003142">
    <property type="entry name" value="PRK04057.1"/>
    <property type="match status" value="1"/>
</dbReference>
<dbReference type="PANTHER" id="PTHR11830">
    <property type="entry name" value="40S RIBOSOMAL PROTEIN S3A"/>
    <property type="match status" value="1"/>
</dbReference>
<dbReference type="Pfam" id="PF01015">
    <property type="entry name" value="Ribosomal_S3Ae"/>
    <property type="match status" value="1"/>
</dbReference>
<dbReference type="SMART" id="SM01397">
    <property type="entry name" value="Ribosomal_S3Ae"/>
    <property type="match status" value="1"/>
</dbReference>
<dbReference type="PROSITE" id="PS01191">
    <property type="entry name" value="RIBOSOMAL_S3AE"/>
    <property type="match status" value="1"/>
</dbReference>
<sequence>MARKRRAARVKDKWTLKKWFTLIAPEYFGMAELGETPADDASKVVGRTVETTLAELTNDYSNQNTYKKLIFKVYRVAGDNAYTKFWRFELTREYLNSLTRRRTSKIEDIVDVTTADGYKLRVKSVVFTVRRCKTSQKRAIRAIMRQIVVEKASSLNFVQFLQECVLGKVPAEIYKNAKKIYPIRRVEIRKIELLAEPAEAETQPAVAEAVA</sequence>
<gene>
    <name evidence="1" type="primary">rps3ae</name>
    <name type="ordered locus">AF_2320</name>
</gene>
<feature type="chain" id="PRO_0000153544" description="Small ribosomal subunit protein eS1">
    <location>
        <begin position="1"/>
        <end position="211"/>
    </location>
</feature>
<reference key="1">
    <citation type="journal article" date="1997" name="Nature">
        <title>The complete genome sequence of the hyperthermophilic, sulphate-reducing archaeon Archaeoglobus fulgidus.</title>
        <authorList>
            <person name="Klenk H.-P."/>
            <person name="Clayton R.A."/>
            <person name="Tomb J.-F."/>
            <person name="White O."/>
            <person name="Nelson K.E."/>
            <person name="Ketchum K.A."/>
            <person name="Dodson R.J."/>
            <person name="Gwinn M.L."/>
            <person name="Hickey E.K."/>
            <person name="Peterson J.D."/>
            <person name="Richardson D.L."/>
            <person name="Kerlavage A.R."/>
            <person name="Graham D.E."/>
            <person name="Kyrpides N.C."/>
            <person name="Fleischmann R.D."/>
            <person name="Quackenbush J."/>
            <person name="Lee N.H."/>
            <person name="Sutton G.G."/>
            <person name="Gill S.R."/>
            <person name="Kirkness E.F."/>
            <person name="Dougherty B.A."/>
            <person name="McKenney K."/>
            <person name="Adams M.D."/>
            <person name="Loftus B.J."/>
            <person name="Peterson S.N."/>
            <person name="Reich C.I."/>
            <person name="McNeil L.K."/>
            <person name="Badger J.H."/>
            <person name="Glodek A."/>
            <person name="Zhou L."/>
            <person name="Overbeek R."/>
            <person name="Gocayne J.D."/>
            <person name="Weidman J.F."/>
            <person name="McDonald L.A."/>
            <person name="Utterback T.R."/>
            <person name="Cotton M.D."/>
            <person name="Spriggs T."/>
            <person name="Artiach P."/>
            <person name="Kaine B.P."/>
            <person name="Sykes S.M."/>
            <person name="Sadow P.W."/>
            <person name="D'Andrea K.P."/>
            <person name="Bowman C."/>
            <person name="Fujii C."/>
            <person name="Garland S.A."/>
            <person name="Mason T.M."/>
            <person name="Olsen G.J."/>
            <person name="Fraser C.M."/>
            <person name="Smith H.O."/>
            <person name="Woese C.R."/>
            <person name="Venter J.C."/>
        </authorList>
    </citation>
    <scope>NUCLEOTIDE SEQUENCE [LARGE SCALE GENOMIC DNA]</scope>
    <source>
        <strain>ATCC 49558 / DSM 4304 / JCM 9628 / NBRC 100126 / VC-16</strain>
    </source>
</reference>
<name>RS3A_ARCFU</name>
<proteinExistence type="inferred from homology"/>
<evidence type="ECO:0000255" key="1">
    <source>
        <dbReference type="HAMAP-Rule" id="MF_00359"/>
    </source>
</evidence>
<evidence type="ECO:0000305" key="2"/>
<accession>O27964</accession>
<organism>
    <name type="scientific">Archaeoglobus fulgidus (strain ATCC 49558 / DSM 4304 / JCM 9628 / NBRC 100126 / VC-16)</name>
    <dbReference type="NCBI Taxonomy" id="224325"/>
    <lineage>
        <taxon>Archaea</taxon>
        <taxon>Methanobacteriati</taxon>
        <taxon>Methanobacteriota</taxon>
        <taxon>Archaeoglobi</taxon>
        <taxon>Archaeoglobales</taxon>
        <taxon>Archaeoglobaceae</taxon>
        <taxon>Archaeoglobus</taxon>
    </lineage>
</organism>